<keyword id="KW-0687">Ribonucleoprotein</keyword>
<keyword id="KW-0689">Ribosomal protein</keyword>
<keyword id="KW-0694">RNA-binding</keyword>
<keyword id="KW-0699">rRNA-binding</keyword>
<keyword id="KW-0820">tRNA-binding</keyword>
<name>RS13_ANAD2</name>
<feature type="chain" id="PRO_1000165594" description="Small ribosomal subunit protein uS13">
    <location>
        <begin position="1"/>
        <end position="128"/>
    </location>
</feature>
<feature type="region of interest" description="Disordered" evidence="2">
    <location>
        <begin position="95"/>
        <end position="128"/>
    </location>
</feature>
<feature type="compositionally biased region" description="Basic residues" evidence="2">
    <location>
        <begin position="95"/>
        <end position="118"/>
    </location>
</feature>
<evidence type="ECO:0000255" key="1">
    <source>
        <dbReference type="HAMAP-Rule" id="MF_01315"/>
    </source>
</evidence>
<evidence type="ECO:0000256" key="2">
    <source>
        <dbReference type="SAM" id="MobiDB-lite"/>
    </source>
</evidence>
<evidence type="ECO:0000305" key="3"/>
<dbReference type="EMBL" id="CP001359">
    <property type="protein sequence ID" value="ACL65383.1"/>
    <property type="molecule type" value="Genomic_DNA"/>
</dbReference>
<dbReference type="RefSeq" id="WP_012633254.1">
    <property type="nucleotide sequence ID" value="NC_011891.1"/>
</dbReference>
<dbReference type="SMR" id="B8J884"/>
<dbReference type="KEGG" id="acp:A2cp1_2042"/>
<dbReference type="HOGENOM" id="CLU_103849_1_2_7"/>
<dbReference type="Proteomes" id="UP000007089">
    <property type="component" value="Chromosome"/>
</dbReference>
<dbReference type="GO" id="GO:0005829">
    <property type="term" value="C:cytosol"/>
    <property type="evidence" value="ECO:0007669"/>
    <property type="project" value="TreeGrafter"/>
</dbReference>
<dbReference type="GO" id="GO:0015935">
    <property type="term" value="C:small ribosomal subunit"/>
    <property type="evidence" value="ECO:0007669"/>
    <property type="project" value="TreeGrafter"/>
</dbReference>
<dbReference type="GO" id="GO:0019843">
    <property type="term" value="F:rRNA binding"/>
    <property type="evidence" value="ECO:0007669"/>
    <property type="project" value="UniProtKB-UniRule"/>
</dbReference>
<dbReference type="GO" id="GO:0003735">
    <property type="term" value="F:structural constituent of ribosome"/>
    <property type="evidence" value="ECO:0007669"/>
    <property type="project" value="InterPro"/>
</dbReference>
<dbReference type="GO" id="GO:0000049">
    <property type="term" value="F:tRNA binding"/>
    <property type="evidence" value="ECO:0007669"/>
    <property type="project" value="UniProtKB-UniRule"/>
</dbReference>
<dbReference type="GO" id="GO:0006412">
    <property type="term" value="P:translation"/>
    <property type="evidence" value="ECO:0007669"/>
    <property type="project" value="UniProtKB-UniRule"/>
</dbReference>
<dbReference type="FunFam" id="1.10.8.50:FF:000001">
    <property type="entry name" value="30S ribosomal protein S13"/>
    <property type="match status" value="1"/>
</dbReference>
<dbReference type="FunFam" id="4.10.910.10:FF:000001">
    <property type="entry name" value="30S ribosomal protein S13"/>
    <property type="match status" value="1"/>
</dbReference>
<dbReference type="Gene3D" id="1.10.8.50">
    <property type="match status" value="1"/>
</dbReference>
<dbReference type="Gene3D" id="4.10.910.10">
    <property type="entry name" value="30s ribosomal protein s13, domain 2"/>
    <property type="match status" value="1"/>
</dbReference>
<dbReference type="HAMAP" id="MF_01315">
    <property type="entry name" value="Ribosomal_uS13"/>
    <property type="match status" value="1"/>
</dbReference>
<dbReference type="InterPro" id="IPR027437">
    <property type="entry name" value="Rbsml_uS13_C"/>
</dbReference>
<dbReference type="InterPro" id="IPR001892">
    <property type="entry name" value="Ribosomal_uS13"/>
</dbReference>
<dbReference type="InterPro" id="IPR010979">
    <property type="entry name" value="Ribosomal_uS13-like_H2TH"/>
</dbReference>
<dbReference type="InterPro" id="IPR019980">
    <property type="entry name" value="Ribosomal_uS13_bac-type"/>
</dbReference>
<dbReference type="InterPro" id="IPR018269">
    <property type="entry name" value="Ribosomal_uS13_CS"/>
</dbReference>
<dbReference type="NCBIfam" id="TIGR03631">
    <property type="entry name" value="uS13_bact"/>
    <property type="match status" value="1"/>
</dbReference>
<dbReference type="PANTHER" id="PTHR10871">
    <property type="entry name" value="30S RIBOSOMAL PROTEIN S13/40S RIBOSOMAL PROTEIN S18"/>
    <property type="match status" value="1"/>
</dbReference>
<dbReference type="PANTHER" id="PTHR10871:SF1">
    <property type="entry name" value="SMALL RIBOSOMAL SUBUNIT PROTEIN US13M"/>
    <property type="match status" value="1"/>
</dbReference>
<dbReference type="Pfam" id="PF00416">
    <property type="entry name" value="Ribosomal_S13"/>
    <property type="match status" value="1"/>
</dbReference>
<dbReference type="PIRSF" id="PIRSF002134">
    <property type="entry name" value="Ribosomal_S13"/>
    <property type="match status" value="1"/>
</dbReference>
<dbReference type="SUPFAM" id="SSF46946">
    <property type="entry name" value="S13-like H2TH domain"/>
    <property type="match status" value="1"/>
</dbReference>
<dbReference type="PROSITE" id="PS00646">
    <property type="entry name" value="RIBOSOMAL_S13_1"/>
    <property type="match status" value="1"/>
</dbReference>
<dbReference type="PROSITE" id="PS50159">
    <property type="entry name" value="RIBOSOMAL_S13_2"/>
    <property type="match status" value="1"/>
</dbReference>
<comment type="function">
    <text evidence="1">Located at the top of the head of the 30S subunit, it contacts several helices of the 16S rRNA. In the 70S ribosome it contacts the 23S rRNA (bridge B1a) and protein L5 of the 50S subunit (bridge B1b), connecting the 2 subunits; these bridges are implicated in subunit movement. Contacts the tRNAs in the A and P-sites.</text>
</comment>
<comment type="subunit">
    <text evidence="1">Part of the 30S ribosomal subunit. Forms a loose heterodimer with protein S19. Forms two bridges to the 50S subunit in the 70S ribosome.</text>
</comment>
<comment type="similarity">
    <text evidence="1">Belongs to the universal ribosomal protein uS13 family.</text>
</comment>
<accession>B8J884</accession>
<protein>
    <recommendedName>
        <fullName evidence="1">Small ribosomal subunit protein uS13</fullName>
    </recommendedName>
    <alternativeName>
        <fullName evidence="3">30S ribosomal protein S13</fullName>
    </alternativeName>
</protein>
<gene>
    <name evidence="1" type="primary">rpsM</name>
    <name type="ordered locus">A2cp1_2042</name>
</gene>
<proteinExistence type="inferred from homology"/>
<organism>
    <name type="scientific">Anaeromyxobacter dehalogenans (strain 2CP-1 / ATCC BAA-258)</name>
    <dbReference type="NCBI Taxonomy" id="455488"/>
    <lineage>
        <taxon>Bacteria</taxon>
        <taxon>Pseudomonadati</taxon>
        <taxon>Myxococcota</taxon>
        <taxon>Myxococcia</taxon>
        <taxon>Myxococcales</taxon>
        <taxon>Cystobacterineae</taxon>
        <taxon>Anaeromyxobacteraceae</taxon>
        <taxon>Anaeromyxobacter</taxon>
    </lineage>
</organism>
<reference key="1">
    <citation type="submission" date="2009-01" db="EMBL/GenBank/DDBJ databases">
        <title>Complete sequence of Anaeromyxobacter dehalogenans 2CP-1.</title>
        <authorList>
            <person name="Lucas S."/>
            <person name="Copeland A."/>
            <person name="Lapidus A."/>
            <person name="Glavina del Rio T."/>
            <person name="Dalin E."/>
            <person name="Tice H."/>
            <person name="Bruce D."/>
            <person name="Goodwin L."/>
            <person name="Pitluck S."/>
            <person name="Saunders E."/>
            <person name="Brettin T."/>
            <person name="Detter J.C."/>
            <person name="Han C."/>
            <person name="Larimer F."/>
            <person name="Land M."/>
            <person name="Hauser L."/>
            <person name="Kyrpides N."/>
            <person name="Ovchinnikova G."/>
            <person name="Beliaev A.S."/>
            <person name="Richardson P."/>
        </authorList>
    </citation>
    <scope>NUCLEOTIDE SEQUENCE [LARGE SCALE GENOMIC DNA]</scope>
    <source>
        <strain>2CP-1 / ATCC BAA-258</strain>
    </source>
</reference>
<sequence length="128" mass="14496">MARIAGVDLPREKRIEVSLQYIYGIGKTSAKLILERANVSPVTRTKDLTDDEVRRIRETIEQNVKVEGDLRREISLNVKRLMDLGCYRGLRHRKGLPVRGQRTHTNARTRKGPKKGLVRKAAAPAPMA</sequence>